<sequence length="147" mass="17074">MKLPAYIDMPFQEWKTSFSFFNKVSVRFSETDMFGHMNNVTPFIYFEEVRISYFKKLNMMSENKQTMTVVASQQCDYLRQVMPYEELRIYVKTSAVGSSSLTLHYLGENLEGEPCFTGAVVMVQVSKESGKAVSWTDEEKETLLHTR</sequence>
<protein>
    <recommendedName>
        <fullName>Uncharacterized protein YsmA</fullName>
    </recommendedName>
</protein>
<name>YSMA_BACSU</name>
<organism>
    <name type="scientific">Bacillus subtilis (strain 168)</name>
    <dbReference type="NCBI Taxonomy" id="224308"/>
    <lineage>
        <taxon>Bacteria</taxon>
        <taxon>Bacillati</taxon>
        <taxon>Bacillota</taxon>
        <taxon>Bacilli</taxon>
        <taxon>Bacillales</taxon>
        <taxon>Bacillaceae</taxon>
        <taxon>Bacillus</taxon>
    </lineage>
</organism>
<gene>
    <name type="primary">ysmA</name>
    <name type="ordered locus">BSU28420</name>
</gene>
<feature type="chain" id="PRO_0000049890" description="Uncharacterized protein YsmA">
    <location>
        <begin position="1"/>
        <end position="147"/>
    </location>
</feature>
<dbReference type="EMBL" id="M17642">
    <property type="protein sequence ID" value="AAA22472.1"/>
    <property type="molecule type" value="Genomic_DNA"/>
</dbReference>
<dbReference type="EMBL" id="Z75208">
    <property type="protein sequence ID" value="CAA99549.1"/>
    <property type="molecule type" value="Genomic_DNA"/>
</dbReference>
<dbReference type="EMBL" id="AL009126">
    <property type="protein sequence ID" value="CAB14802.1"/>
    <property type="molecule type" value="Genomic_DNA"/>
</dbReference>
<dbReference type="PIR" id="B27893">
    <property type="entry name" value="B27893"/>
</dbReference>
<dbReference type="RefSeq" id="NP_390720.1">
    <property type="nucleotide sequence ID" value="NC_000964.3"/>
</dbReference>
<dbReference type="RefSeq" id="WP_004398491.1">
    <property type="nucleotide sequence ID" value="NZ_OZ025638.1"/>
</dbReference>
<dbReference type="SMR" id="P11469"/>
<dbReference type="FunCoup" id="P11469">
    <property type="interactions" value="20"/>
</dbReference>
<dbReference type="STRING" id="224308.BSU28420"/>
<dbReference type="PaxDb" id="224308-BSU28420"/>
<dbReference type="EnsemblBacteria" id="CAB14802">
    <property type="protein sequence ID" value="CAB14802"/>
    <property type="gene ID" value="BSU_28420"/>
</dbReference>
<dbReference type="GeneID" id="937652"/>
<dbReference type="KEGG" id="bsu:BSU28420"/>
<dbReference type="PATRIC" id="fig|224308.179.peg.3087"/>
<dbReference type="eggNOG" id="COG0824">
    <property type="taxonomic scope" value="Bacteria"/>
</dbReference>
<dbReference type="InParanoid" id="P11469"/>
<dbReference type="OrthoDB" id="9799036at2"/>
<dbReference type="PhylomeDB" id="P11469"/>
<dbReference type="BioCyc" id="BSUB:BSU28420-MONOMER"/>
<dbReference type="Proteomes" id="UP000001570">
    <property type="component" value="Chromosome"/>
</dbReference>
<dbReference type="GO" id="GO:0047617">
    <property type="term" value="F:fatty acyl-CoA hydrolase activity"/>
    <property type="evidence" value="ECO:0000318"/>
    <property type="project" value="GO_Central"/>
</dbReference>
<dbReference type="CDD" id="cd00586">
    <property type="entry name" value="4HBT"/>
    <property type="match status" value="1"/>
</dbReference>
<dbReference type="Gene3D" id="3.10.129.10">
    <property type="entry name" value="Hotdog Thioesterase"/>
    <property type="match status" value="1"/>
</dbReference>
<dbReference type="InterPro" id="IPR050563">
    <property type="entry name" value="4-hydroxybenzoyl-CoA_TE"/>
</dbReference>
<dbReference type="InterPro" id="IPR029069">
    <property type="entry name" value="HotDog_dom_sf"/>
</dbReference>
<dbReference type="PANTHER" id="PTHR31793">
    <property type="entry name" value="4-HYDROXYBENZOYL-COA THIOESTERASE FAMILY MEMBER"/>
    <property type="match status" value="1"/>
</dbReference>
<dbReference type="PANTHER" id="PTHR31793:SF24">
    <property type="entry name" value="LONG-CHAIN ACYL-COA THIOESTERASE FADM"/>
    <property type="match status" value="1"/>
</dbReference>
<dbReference type="Pfam" id="PF13279">
    <property type="entry name" value="4HBT_2"/>
    <property type="match status" value="1"/>
</dbReference>
<dbReference type="SUPFAM" id="SSF54637">
    <property type="entry name" value="Thioesterase/thiol ester dehydrase-isomerase"/>
    <property type="match status" value="1"/>
</dbReference>
<keyword id="KW-1185">Reference proteome</keyword>
<reference key="1">
    <citation type="journal article" date="1986" name="J. Gen. Microbiol.">
        <title>The nucleotide sequence and the transcription during sporulation of the gerE gene of Bacillus subtilis.</title>
        <authorList>
            <person name="Cutting S.M."/>
            <person name="Mandelstam J."/>
        </authorList>
    </citation>
    <scope>NUCLEOTIDE SEQUENCE [GENOMIC DNA]</scope>
</reference>
<reference key="2">
    <citation type="journal article" date="1996" name="Microbiology">
        <title>The dnaB-pheA (256 degrees-240 degrees) region of the Bacillus subtilis chromosome containing genes responsible for stress responses, the utilization of plant cell walls and primary metabolism.</title>
        <authorList>
            <person name="Wipat A."/>
            <person name="Carter N."/>
            <person name="Brignell C.S."/>
            <person name="Guy J.B."/>
            <person name="Piper K."/>
            <person name="Sanders J."/>
            <person name="Emmerson P.T."/>
            <person name="Harwood C.R."/>
        </authorList>
    </citation>
    <scope>NUCLEOTIDE SEQUENCE [GENOMIC DNA]</scope>
    <source>
        <strain>168</strain>
    </source>
</reference>
<reference key="3">
    <citation type="journal article" date="1997" name="Nature">
        <title>The complete genome sequence of the Gram-positive bacterium Bacillus subtilis.</title>
        <authorList>
            <person name="Kunst F."/>
            <person name="Ogasawara N."/>
            <person name="Moszer I."/>
            <person name="Albertini A.M."/>
            <person name="Alloni G."/>
            <person name="Azevedo V."/>
            <person name="Bertero M.G."/>
            <person name="Bessieres P."/>
            <person name="Bolotin A."/>
            <person name="Borchert S."/>
            <person name="Borriss R."/>
            <person name="Boursier L."/>
            <person name="Brans A."/>
            <person name="Braun M."/>
            <person name="Brignell S.C."/>
            <person name="Bron S."/>
            <person name="Brouillet S."/>
            <person name="Bruschi C.V."/>
            <person name="Caldwell B."/>
            <person name="Capuano V."/>
            <person name="Carter N.M."/>
            <person name="Choi S.-K."/>
            <person name="Codani J.-J."/>
            <person name="Connerton I.F."/>
            <person name="Cummings N.J."/>
            <person name="Daniel R.A."/>
            <person name="Denizot F."/>
            <person name="Devine K.M."/>
            <person name="Duesterhoeft A."/>
            <person name="Ehrlich S.D."/>
            <person name="Emmerson P.T."/>
            <person name="Entian K.-D."/>
            <person name="Errington J."/>
            <person name="Fabret C."/>
            <person name="Ferrari E."/>
            <person name="Foulger D."/>
            <person name="Fritz C."/>
            <person name="Fujita M."/>
            <person name="Fujita Y."/>
            <person name="Fuma S."/>
            <person name="Galizzi A."/>
            <person name="Galleron N."/>
            <person name="Ghim S.-Y."/>
            <person name="Glaser P."/>
            <person name="Goffeau A."/>
            <person name="Golightly E.J."/>
            <person name="Grandi G."/>
            <person name="Guiseppi G."/>
            <person name="Guy B.J."/>
            <person name="Haga K."/>
            <person name="Haiech J."/>
            <person name="Harwood C.R."/>
            <person name="Henaut A."/>
            <person name="Hilbert H."/>
            <person name="Holsappel S."/>
            <person name="Hosono S."/>
            <person name="Hullo M.-F."/>
            <person name="Itaya M."/>
            <person name="Jones L.-M."/>
            <person name="Joris B."/>
            <person name="Karamata D."/>
            <person name="Kasahara Y."/>
            <person name="Klaerr-Blanchard M."/>
            <person name="Klein C."/>
            <person name="Kobayashi Y."/>
            <person name="Koetter P."/>
            <person name="Koningstein G."/>
            <person name="Krogh S."/>
            <person name="Kumano M."/>
            <person name="Kurita K."/>
            <person name="Lapidus A."/>
            <person name="Lardinois S."/>
            <person name="Lauber J."/>
            <person name="Lazarevic V."/>
            <person name="Lee S.-M."/>
            <person name="Levine A."/>
            <person name="Liu H."/>
            <person name="Masuda S."/>
            <person name="Mauel C."/>
            <person name="Medigue C."/>
            <person name="Medina N."/>
            <person name="Mellado R.P."/>
            <person name="Mizuno M."/>
            <person name="Moestl D."/>
            <person name="Nakai S."/>
            <person name="Noback M."/>
            <person name="Noone D."/>
            <person name="O'Reilly M."/>
            <person name="Ogawa K."/>
            <person name="Ogiwara A."/>
            <person name="Oudega B."/>
            <person name="Park S.-H."/>
            <person name="Parro V."/>
            <person name="Pohl T.M."/>
            <person name="Portetelle D."/>
            <person name="Porwollik S."/>
            <person name="Prescott A.M."/>
            <person name="Presecan E."/>
            <person name="Pujic P."/>
            <person name="Purnelle B."/>
            <person name="Rapoport G."/>
            <person name="Rey M."/>
            <person name="Reynolds S."/>
            <person name="Rieger M."/>
            <person name="Rivolta C."/>
            <person name="Rocha E."/>
            <person name="Roche B."/>
            <person name="Rose M."/>
            <person name="Sadaie Y."/>
            <person name="Sato T."/>
            <person name="Scanlan E."/>
            <person name="Schleich S."/>
            <person name="Schroeter R."/>
            <person name="Scoffone F."/>
            <person name="Sekiguchi J."/>
            <person name="Sekowska A."/>
            <person name="Seror S.J."/>
            <person name="Serror P."/>
            <person name="Shin B.-S."/>
            <person name="Soldo B."/>
            <person name="Sorokin A."/>
            <person name="Tacconi E."/>
            <person name="Takagi T."/>
            <person name="Takahashi H."/>
            <person name="Takemaru K."/>
            <person name="Takeuchi M."/>
            <person name="Tamakoshi A."/>
            <person name="Tanaka T."/>
            <person name="Terpstra P."/>
            <person name="Tognoni A."/>
            <person name="Tosato V."/>
            <person name="Uchiyama S."/>
            <person name="Vandenbol M."/>
            <person name="Vannier F."/>
            <person name="Vassarotti A."/>
            <person name="Viari A."/>
            <person name="Wambutt R."/>
            <person name="Wedler E."/>
            <person name="Wedler H."/>
            <person name="Weitzenegger T."/>
            <person name="Winters P."/>
            <person name="Wipat A."/>
            <person name="Yamamoto H."/>
            <person name="Yamane K."/>
            <person name="Yasumoto K."/>
            <person name="Yata K."/>
            <person name="Yoshida K."/>
            <person name="Yoshikawa H.-F."/>
            <person name="Zumstein E."/>
            <person name="Yoshikawa H."/>
            <person name="Danchin A."/>
        </authorList>
    </citation>
    <scope>NUCLEOTIDE SEQUENCE [LARGE SCALE GENOMIC DNA]</scope>
    <source>
        <strain>168</strain>
    </source>
</reference>
<accession>P11469</accession>
<proteinExistence type="predicted"/>